<sequence length="94" mass="11482">MILETISKQLQEQQESLNKDYRKKLESIKERSDRLESDLKTQFDAQLEKWEQNFKGYEQQLTDILNEREQLDLDQQRLNAQKQALENHMKQREE</sequence>
<keyword id="KW-1185">Reference proteome</keyword>
<name>Y451_HELPY</name>
<proteinExistence type="uncertain"/>
<gene>
    <name type="ordered locus">HP_0451</name>
</gene>
<organism>
    <name type="scientific">Helicobacter pylori (strain ATCC 700392 / 26695)</name>
    <name type="common">Campylobacter pylori</name>
    <dbReference type="NCBI Taxonomy" id="85962"/>
    <lineage>
        <taxon>Bacteria</taxon>
        <taxon>Pseudomonadati</taxon>
        <taxon>Campylobacterota</taxon>
        <taxon>Epsilonproteobacteria</taxon>
        <taxon>Campylobacterales</taxon>
        <taxon>Helicobacteraceae</taxon>
        <taxon>Helicobacter</taxon>
    </lineage>
</organism>
<dbReference type="EMBL" id="AE000511">
    <property type="protein sequence ID" value="AAD24378.1"/>
    <property type="molecule type" value="Genomic_DNA"/>
</dbReference>
<dbReference type="RefSeq" id="NP_207249.1">
    <property type="nucleotide sequence ID" value="NC_000915.1"/>
</dbReference>
<dbReference type="RefSeq" id="WP_000599839.1">
    <property type="nucleotide sequence ID" value="NC_018939.1"/>
</dbReference>
<dbReference type="SMR" id="Q9WXL5"/>
<dbReference type="STRING" id="85962.HP_0451"/>
<dbReference type="EnsemblBacteria" id="AAD24378">
    <property type="protein sequence ID" value="AAD24378"/>
    <property type="gene ID" value="HP_0451"/>
</dbReference>
<dbReference type="KEGG" id="hpy:HP_0451"/>
<dbReference type="PATRIC" id="fig|85962.8.peg.469"/>
<dbReference type="InParanoid" id="Q9WXL5"/>
<dbReference type="Proteomes" id="UP000000429">
    <property type="component" value="Chromosome"/>
</dbReference>
<reference key="1">
    <citation type="journal article" date="1997" name="Nature">
        <title>The complete genome sequence of the gastric pathogen Helicobacter pylori.</title>
        <authorList>
            <person name="Tomb J.-F."/>
            <person name="White O."/>
            <person name="Kerlavage A.R."/>
            <person name="Clayton R.A."/>
            <person name="Sutton G.G."/>
            <person name="Fleischmann R.D."/>
            <person name="Ketchum K.A."/>
            <person name="Klenk H.-P."/>
            <person name="Gill S.R."/>
            <person name="Dougherty B.A."/>
            <person name="Nelson K.E."/>
            <person name="Quackenbush J."/>
            <person name="Zhou L."/>
            <person name="Kirkness E.F."/>
            <person name="Peterson S.N."/>
            <person name="Loftus B.J."/>
            <person name="Richardson D.L."/>
            <person name="Dodson R.J."/>
            <person name="Khalak H.G."/>
            <person name="Glodek A."/>
            <person name="McKenney K."/>
            <person name="FitzGerald L.M."/>
            <person name="Lee N."/>
            <person name="Adams M.D."/>
            <person name="Hickey E.K."/>
            <person name="Berg D.E."/>
            <person name="Gocayne J.D."/>
            <person name="Utterback T.R."/>
            <person name="Peterson J.D."/>
            <person name="Kelley J.M."/>
            <person name="Cotton M.D."/>
            <person name="Weidman J.F."/>
            <person name="Fujii C."/>
            <person name="Bowman C."/>
            <person name="Watthey L."/>
            <person name="Wallin E."/>
            <person name="Hayes W.S."/>
            <person name="Borodovsky M."/>
            <person name="Karp P.D."/>
            <person name="Smith H.O."/>
            <person name="Fraser C.M."/>
            <person name="Venter J.C."/>
        </authorList>
    </citation>
    <scope>NUCLEOTIDE SEQUENCE [LARGE SCALE GENOMIC DNA]</scope>
    <source>
        <strain>ATCC 700392 / 26695</strain>
    </source>
</reference>
<accession>Q9WXL5</accession>
<feature type="chain" id="PRO_0000128685" description="Putative uncharacterized protein HP_0451">
    <location>
        <begin position="1"/>
        <end position="94"/>
    </location>
</feature>
<evidence type="ECO:0000305" key="1"/>
<protein>
    <recommendedName>
        <fullName>Putative uncharacterized protein HP_0451</fullName>
    </recommendedName>
</protein>
<comment type="caution">
    <text evidence="1">Could be the product of a pseudogene. There is no ortholog for HP_0451 in strain J99.</text>
</comment>